<comment type="function">
    <text evidence="1">Catalyzes the formation of acetyl phosphate from acetate and ATP. Can also catalyze the reverse reaction.</text>
</comment>
<comment type="catalytic activity">
    <reaction evidence="1">
        <text>acetate + ATP = acetyl phosphate + ADP</text>
        <dbReference type="Rhea" id="RHEA:11352"/>
        <dbReference type="ChEBI" id="CHEBI:22191"/>
        <dbReference type="ChEBI" id="CHEBI:30089"/>
        <dbReference type="ChEBI" id="CHEBI:30616"/>
        <dbReference type="ChEBI" id="CHEBI:456216"/>
        <dbReference type="EC" id="2.7.2.1"/>
    </reaction>
</comment>
<comment type="cofactor">
    <cofactor evidence="1">
        <name>Mg(2+)</name>
        <dbReference type="ChEBI" id="CHEBI:18420"/>
    </cofactor>
    <cofactor evidence="1">
        <name>Mn(2+)</name>
        <dbReference type="ChEBI" id="CHEBI:29035"/>
    </cofactor>
    <text evidence="1">Mg(2+). Can also accept Mn(2+).</text>
</comment>
<comment type="pathway">
    <text evidence="1">Metabolic intermediate biosynthesis; acetyl-CoA biosynthesis; acetyl-CoA from acetate: step 1/2.</text>
</comment>
<comment type="subunit">
    <text evidence="1">Homodimer.</text>
</comment>
<comment type="subcellular location">
    <subcellularLocation>
        <location evidence="1">Cytoplasm</location>
    </subcellularLocation>
</comment>
<comment type="similarity">
    <text evidence="1">Belongs to the acetokinase family.</text>
</comment>
<protein>
    <recommendedName>
        <fullName evidence="1">Acetate kinase</fullName>
        <ecNumber evidence="1">2.7.2.1</ecNumber>
    </recommendedName>
    <alternativeName>
        <fullName evidence="1">Acetokinase</fullName>
    </alternativeName>
</protein>
<keyword id="KW-0067">ATP-binding</keyword>
<keyword id="KW-0963">Cytoplasm</keyword>
<keyword id="KW-0418">Kinase</keyword>
<keyword id="KW-0460">Magnesium</keyword>
<keyword id="KW-0479">Metal-binding</keyword>
<keyword id="KW-0547">Nucleotide-binding</keyword>
<keyword id="KW-1185">Reference proteome</keyword>
<keyword id="KW-0808">Transferase</keyword>
<proteinExistence type="inferred from homology"/>
<reference key="1">
    <citation type="journal article" date="2008" name="Appl. Environ. Microbiol.">
        <title>Genome of the epsilonproteobacterial chemolithoautotroph Sulfurimonas denitrificans.</title>
        <authorList>
            <person name="Sievert S.M."/>
            <person name="Scott K.M."/>
            <person name="Klotz M.G."/>
            <person name="Chain P.S.G."/>
            <person name="Hauser L.J."/>
            <person name="Hemp J."/>
            <person name="Huegler M."/>
            <person name="Land M."/>
            <person name="Lapidus A."/>
            <person name="Larimer F.W."/>
            <person name="Lucas S."/>
            <person name="Malfatti S.A."/>
            <person name="Meyer F."/>
            <person name="Paulsen I.T."/>
            <person name="Ren Q."/>
            <person name="Simon J."/>
            <person name="Bailey K."/>
            <person name="Diaz E."/>
            <person name="Fitzpatrick K.A."/>
            <person name="Glover B."/>
            <person name="Gwatney N."/>
            <person name="Korajkic A."/>
            <person name="Long A."/>
            <person name="Mobberley J.M."/>
            <person name="Pantry S.N."/>
            <person name="Pazder G."/>
            <person name="Peterson S."/>
            <person name="Quintanilla J.D."/>
            <person name="Sprinkle R."/>
            <person name="Stephens J."/>
            <person name="Thomas P."/>
            <person name="Vaughn R."/>
            <person name="Weber M.J."/>
            <person name="Wooten L.L."/>
        </authorList>
    </citation>
    <scope>NUCLEOTIDE SEQUENCE [LARGE SCALE GENOMIC DNA]</scope>
    <source>
        <strain>ATCC 33889 / DSM 1251</strain>
    </source>
</reference>
<dbReference type="EC" id="2.7.2.1" evidence="1"/>
<dbReference type="EMBL" id="CP000153">
    <property type="protein sequence ID" value="ABB43337.1"/>
    <property type="molecule type" value="Genomic_DNA"/>
</dbReference>
<dbReference type="RefSeq" id="WP_011371692.1">
    <property type="nucleotide sequence ID" value="NC_007575.1"/>
</dbReference>
<dbReference type="SMR" id="Q30UJ4"/>
<dbReference type="STRING" id="326298.Suden_0056"/>
<dbReference type="KEGG" id="tdn:Suden_0056"/>
<dbReference type="eggNOG" id="COG0282">
    <property type="taxonomic scope" value="Bacteria"/>
</dbReference>
<dbReference type="HOGENOM" id="CLU_020352_0_1_7"/>
<dbReference type="OrthoDB" id="9802453at2"/>
<dbReference type="UniPathway" id="UPA00340">
    <property type="reaction ID" value="UER00458"/>
</dbReference>
<dbReference type="Proteomes" id="UP000002714">
    <property type="component" value="Chromosome"/>
</dbReference>
<dbReference type="GO" id="GO:0005737">
    <property type="term" value="C:cytoplasm"/>
    <property type="evidence" value="ECO:0007669"/>
    <property type="project" value="UniProtKB-SubCell"/>
</dbReference>
<dbReference type="GO" id="GO:0008776">
    <property type="term" value="F:acetate kinase activity"/>
    <property type="evidence" value="ECO:0007669"/>
    <property type="project" value="UniProtKB-UniRule"/>
</dbReference>
<dbReference type="GO" id="GO:0005524">
    <property type="term" value="F:ATP binding"/>
    <property type="evidence" value="ECO:0007669"/>
    <property type="project" value="UniProtKB-KW"/>
</dbReference>
<dbReference type="GO" id="GO:0000287">
    <property type="term" value="F:magnesium ion binding"/>
    <property type="evidence" value="ECO:0007669"/>
    <property type="project" value="UniProtKB-UniRule"/>
</dbReference>
<dbReference type="GO" id="GO:0006083">
    <property type="term" value="P:acetate metabolic process"/>
    <property type="evidence" value="ECO:0007669"/>
    <property type="project" value="TreeGrafter"/>
</dbReference>
<dbReference type="GO" id="GO:0006085">
    <property type="term" value="P:acetyl-CoA biosynthetic process"/>
    <property type="evidence" value="ECO:0007669"/>
    <property type="project" value="UniProtKB-UniRule"/>
</dbReference>
<dbReference type="CDD" id="cd24010">
    <property type="entry name" value="ASKHA_NBD_AcK_PK"/>
    <property type="match status" value="1"/>
</dbReference>
<dbReference type="Gene3D" id="3.30.420.40">
    <property type="match status" value="2"/>
</dbReference>
<dbReference type="HAMAP" id="MF_00020">
    <property type="entry name" value="Acetate_kinase"/>
    <property type="match status" value="1"/>
</dbReference>
<dbReference type="InterPro" id="IPR004372">
    <property type="entry name" value="Ac/propionate_kinase"/>
</dbReference>
<dbReference type="InterPro" id="IPR000890">
    <property type="entry name" value="Aliphatic_acid_kin_short-chain"/>
</dbReference>
<dbReference type="InterPro" id="IPR023865">
    <property type="entry name" value="Aliphatic_acid_kinase_CS"/>
</dbReference>
<dbReference type="InterPro" id="IPR043129">
    <property type="entry name" value="ATPase_NBD"/>
</dbReference>
<dbReference type="NCBIfam" id="TIGR00016">
    <property type="entry name" value="ackA"/>
    <property type="match status" value="1"/>
</dbReference>
<dbReference type="PANTHER" id="PTHR21060">
    <property type="entry name" value="ACETATE KINASE"/>
    <property type="match status" value="1"/>
</dbReference>
<dbReference type="PANTHER" id="PTHR21060:SF15">
    <property type="entry name" value="ACETATE KINASE-RELATED"/>
    <property type="match status" value="1"/>
</dbReference>
<dbReference type="Pfam" id="PF00871">
    <property type="entry name" value="Acetate_kinase"/>
    <property type="match status" value="1"/>
</dbReference>
<dbReference type="PIRSF" id="PIRSF000722">
    <property type="entry name" value="Acetate_prop_kin"/>
    <property type="match status" value="1"/>
</dbReference>
<dbReference type="PRINTS" id="PR00471">
    <property type="entry name" value="ACETATEKNASE"/>
</dbReference>
<dbReference type="SUPFAM" id="SSF53067">
    <property type="entry name" value="Actin-like ATPase domain"/>
    <property type="match status" value="2"/>
</dbReference>
<dbReference type="PROSITE" id="PS01076">
    <property type="entry name" value="ACETATE_KINASE_2"/>
    <property type="match status" value="1"/>
</dbReference>
<name>ACKA_SULDN</name>
<feature type="chain" id="PRO_1000002283" description="Acetate kinase">
    <location>
        <begin position="1"/>
        <end position="389"/>
    </location>
</feature>
<feature type="active site" description="Proton donor/acceptor" evidence="1">
    <location>
        <position position="145"/>
    </location>
</feature>
<feature type="binding site" evidence="1">
    <location>
        <position position="7"/>
    </location>
    <ligand>
        <name>Mg(2+)</name>
        <dbReference type="ChEBI" id="CHEBI:18420"/>
    </ligand>
</feature>
<feature type="binding site" evidence="1">
    <location>
        <position position="14"/>
    </location>
    <ligand>
        <name>ATP</name>
        <dbReference type="ChEBI" id="CHEBI:30616"/>
    </ligand>
</feature>
<feature type="binding site" evidence="1">
    <location>
        <position position="88"/>
    </location>
    <ligand>
        <name>substrate</name>
    </ligand>
</feature>
<feature type="binding site" evidence="1">
    <location>
        <begin position="205"/>
        <end position="209"/>
    </location>
    <ligand>
        <name>ATP</name>
        <dbReference type="ChEBI" id="CHEBI:30616"/>
    </ligand>
</feature>
<feature type="binding site" evidence="1">
    <location>
        <begin position="279"/>
        <end position="281"/>
    </location>
    <ligand>
        <name>ATP</name>
        <dbReference type="ChEBI" id="CHEBI:30616"/>
    </ligand>
</feature>
<feature type="binding site" evidence="1">
    <location>
        <begin position="324"/>
        <end position="328"/>
    </location>
    <ligand>
        <name>ATP</name>
        <dbReference type="ChEBI" id="CHEBI:30616"/>
    </ligand>
</feature>
<feature type="binding site" evidence="1">
    <location>
        <position position="375"/>
    </location>
    <ligand>
        <name>Mg(2+)</name>
        <dbReference type="ChEBI" id="CHEBI:18420"/>
    </ligand>
</feature>
<feature type="site" description="Transition state stabilizer" evidence="1">
    <location>
        <position position="177"/>
    </location>
</feature>
<feature type="site" description="Transition state stabilizer" evidence="1">
    <location>
        <position position="238"/>
    </location>
</feature>
<organism>
    <name type="scientific">Sulfurimonas denitrificans (strain ATCC 33889 / DSM 1251)</name>
    <name type="common">Thiomicrospira denitrificans (strain ATCC 33889 / DSM 1251)</name>
    <dbReference type="NCBI Taxonomy" id="326298"/>
    <lineage>
        <taxon>Bacteria</taxon>
        <taxon>Pseudomonadati</taxon>
        <taxon>Campylobacterota</taxon>
        <taxon>Epsilonproteobacteria</taxon>
        <taxon>Campylobacterales</taxon>
        <taxon>Sulfurimonadaceae</taxon>
        <taxon>Sulfurimonas</taxon>
    </lineage>
</organism>
<gene>
    <name evidence="1" type="primary">ackA</name>
    <name type="ordered locus">Suden_0056</name>
</gene>
<evidence type="ECO:0000255" key="1">
    <source>
        <dbReference type="HAMAP-Rule" id="MF_00020"/>
    </source>
</evidence>
<sequence length="389" mass="43573">MKIAVINSGSSSIKFKLYLMPQSIVLAHVHVEKIGETSSKITFRHTDKKEVFSNKIDTHHEGLRVINDILKEYQIIEHFSSLDAIAHRVVHGGDFFKSATLINEDVIYKIRELIPLSPLHNRANLEGILVSLKKAPSVPQIAVFDTSFHASLPKEAYLYALPYELYKEHKIRRFGFHGISHAYVLKKVAQEMQKNLHGLNMITLHLGNGSSACAIRNGKSVDTSMGFTPLEGLVMGSRSGDIDPQIVIYLQKELGYGLDEVEELLNRHSGLIGVCGEIDLREIIKRDDELSHVALDMMTRRVKKYIGAYMALLGRVDAIAFCAGIGENSSEVREKILKNLELFGIELDTKANEKNLTKISKQTSKIEVFVINTDEELEIALEAEALLRA</sequence>
<accession>Q30UJ4</accession>